<proteinExistence type="inferred from homology"/>
<comment type="function">
    <text evidence="1">Functions as a component of numerous distinct DCX (DDB1-CUL4-X-box) E3 ubiquitin-protein ligase complexes which mediate the ubiquitination and subsequent proteasomal degradation of target proteins. In the DCX complexes, acts as a scaffolding subunit required to stabilize the complex.</text>
</comment>
<comment type="pathway">
    <text evidence="1">Protein modification; protein ubiquitination.</text>
</comment>
<comment type="subunit">
    <text evidence="1">Component of numerous DCX (DDB1-CUL4-X-box) E3 ubiquitin-protein ligase complexes which consist of a core of DDB1, cullin-4 (CUL4A or CUL4B), DDA1 and RBX1.</text>
</comment>
<comment type="similarity">
    <text evidence="3">Belongs to the DDA1 family.</text>
</comment>
<accession>Q5BL73</accession>
<protein>
    <recommendedName>
        <fullName evidence="1">DET1- and DDB1-associated protein 1</fullName>
    </recommendedName>
</protein>
<gene>
    <name evidence="1" type="primary">dda1</name>
    <name type="ORF">TNeu111h01.1</name>
</gene>
<sequence length="101" mass="11716">MADFLKGLPVYNESNFSRFHADSVCKASNRRPSVYLPTREYPSDQIIVTEKTNILLRYLHQQWDKKNAAKKRDQDQLEIGETSAPPRKIARTDSQEMSEDT</sequence>
<reference key="1">
    <citation type="submission" date="2006-10" db="EMBL/GenBank/DDBJ databases">
        <authorList>
            <consortium name="Sanger Xenopus tropicalis EST/cDNA project"/>
        </authorList>
    </citation>
    <scope>NUCLEOTIDE SEQUENCE [LARGE SCALE MRNA]</scope>
    <source>
        <tissue>Neurula</tissue>
    </source>
</reference>
<reference key="2">
    <citation type="submission" date="2005-02" db="EMBL/GenBank/DDBJ databases">
        <authorList>
            <consortium name="NIH - Xenopus Gene Collection (XGC) project"/>
        </authorList>
    </citation>
    <scope>NUCLEOTIDE SEQUENCE [LARGE SCALE MRNA]</scope>
    <source>
        <tissue>Embryo</tissue>
    </source>
</reference>
<feature type="chain" id="PRO_0000310276" description="DET1- and DDB1-associated protein 1">
    <location>
        <begin position="1"/>
        <end position="101"/>
    </location>
</feature>
<feature type="region of interest" description="Disordered" evidence="2">
    <location>
        <begin position="67"/>
        <end position="101"/>
    </location>
</feature>
<organism>
    <name type="scientific">Xenopus tropicalis</name>
    <name type="common">Western clawed frog</name>
    <name type="synonym">Silurana tropicalis</name>
    <dbReference type="NCBI Taxonomy" id="8364"/>
    <lineage>
        <taxon>Eukaryota</taxon>
        <taxon>Metazoa</taxon>
        <taxon>Chordata</taxon>
        <taxon>Craniata</taxon>
        <taxon>Vertebrata</taxon>
        <taxon>Euteleostomi</taxon>
        <taxon>Amphibia</taxon>
        <taxon>Batrachia</taxon>
        <taxon>Anura</taxon>
        <taxon>Pipoidea</taxon>
        <taxon>Pipidae</taxon>
        <taxon>Xenopodinae</taxon>
        <taxon>Xenopus</taxon>
        <taxon>Silurana</taxon>
    </lineage>
</organism>
<evidence type="ECO:0000250" key="1">
    <source>
        <dbReference type="UniProtKB" id="Q9BW61"/>
    </source>
</evidence>
<evidence type="ECO:0000256" key="2">
    <source>
        <dbReference type="SAM" id="MobiDB-lite"/>
    </source>
</evidence>
<evidence type="ECO:0000305" key="3"/>
<dbReference type="EMBL" id="CR760393">
    <property type="protein sequence ID" value="CAJ82685.1"/>
    <property type="molecule type" value="mRNA"/>
</dbReference>
<dbReference type="EMBL" id="BC090578">
    <property type="protein sequence ID" value="AAH90578.1"/>
    <property type="molecule type" value="mRNA"/>
</dbReference>
<dbReference type="RefSeq" id="NP_001017216.1">
    <property type="nucleotide sequence ID" value="NM_001017216.2"/>
</dbReference>
<dbReference type="SMR" id="Q5BL73"/>
<dbReference type="FunCoup" id="Q5BL73">
    <property type="interactions" value="1086"/>
</dbReference>
<dbReference type="STRING" id="8364.ENSXETP00000029871"/>
<dbReference type="PaxDb" id="8364-ENSXETP00000028669"/>
<dbReference type="DNASU" id="549970"/>
<dbReference type="GeneID" id="549970"/>
<dbReference type="KEGG" id="xtr:549970"/>
<dbReference type="AGR" id="Xenbase:XB-GENE-973045"/>
<dbReference type="CTD" id="79016"/>
<dbReference type="Xenbase" id="XB-GENE-973045">
    <property type="gene designation" value="dda1"/>
</dbReference>
<dbReference type="eggNOG" id="KOG4816">
    <property type="taxonomic scope" value="Eukaryota"/>
</dbReference>
<dbReference type="HOGENOM" id="CLU_144562_1_0_1"/>
<dbReference type="InParanoid" id="Q5BL73"/>
<dbReference type="OMA" id="RYLHQHW"/>
<dbReference type="OrthoDB" id="8598182at2759"/>
<dbReference type="PhylomeDB" id="Q5BL73"/>
<dbReference type="TreeFam" id="TF323534"/>
<dbReference type="UniPathway" id="UPA00143"/>
<dbReference type="Proteomes" id="UP000008143">
    <property type="component" value="Chromosome 1"/>
</dbReference>
<dbReference type="GO" id="GO:0080008">
    <property type="term" value="C:Cul4-RING E3 ubiquitin ligase complex"/>
    <property type="evidence" value="ECO:0000250"/>
    <property type="project" value="UniProtKB"/>
</dbReference>
<dbReference type="GO" id="GO:0000209">
    <property type="term" value="P:protein polyubiquitination"/>
    <property type="evidence" value="ECO:0000250"/>
    <property type="project" value="UniProtKB"/>
</dbReference>
<dbReference type="GO" id="GO:0032434">
    <property type="term" value="P:regulation of proteasomal ubiquitin-dependent protein catabolic process"/>
    <property type="evidence" value="ECO:0007669"/>
    <property type="project" value="InterPro"/>
</dbReference>
<dbReference type="InterPro" id="IPR033575">
    <property type="entry name" value="DDA1-like"/>
</dbReference>
<dbReference type="InterPro" id="IPR018276">
    <property type="entry name" value="DDA1_dom"/>
</dbReference>
<dbReference type="PANTHER" id="PTHR31879">
    <property type="entry name" value="DET1- AND DDB1-ASSOCIATED PROTEIN 1"/>
    <property type="match status" value="1"/>
</dbReference>
<dbReference type="PANTHER" id="PTHR31879:SF2">
    <property type="entry name" value="DET1- AND DDB1-ASSOCIATED PROTEIN 1"/>
    <property type="match status" value="1"/>
</dbReference>
<dbReference type="Pfam" id="PF10172">
    <property type="entry name" value="DDA1"/>
    <property type="match status" value="1"/>
</dbReference>
<keyword id="KW-1185">Reference proteome</keyword>
<keyword id="KW-0833">Ubl conjugation pathway</keyword>
<name>DDA1_XENTR</name>